<organism>
    <name type="scientific">Exiguobacterium sibiricum (strain DSM 17290 / CCUG 55495 / CIP 109462 / JCM 13490 / 255-15)</name>
    <dbReference type="NCBI Taxonomy" id="262543"/>
    <lineage>
        <taxon>Bacteria</taxon>
        <taxon>Bacillati</taxon>
        <taxon>Bacillota</taxon>
        <taxon>Bacilli</taxon>
        <taxon>Bacillales</taxon>
        <taxon>Bacillales Family XII. Incertae Sedis</taxon>
        <taxon>Exiguobacterium</taxon>
    </lineage>
</organism>
<gene>
    <name evidence="1" type="primary">dapB</name>
    <name type="ordered locus">Exig_0488</name>
</gene>
<sequence>MRLAIHGYGATGHYVHELAPDAVVAVIDKTKTAEQVPSYGTLAEMTESVDAIIDFSHPSLLPDLLAYGIKTKTPLVIATTGFSEAELQTIRDASTQIPIFQSYNMSFGIAMMQQLLKTLVPLAGAFDIELLEKHHNQKVDAPSGTAELLLRTIQDLRDVQPVYERESTREKREPNEIGMHSMRGGTIFGEHEVLFAGVDELIEIKHTALSKKVFASGAIKAAEALIQKSAGLYTLETLYTQEDSHVIN</sequence>
<accession>B1YJ40</accession>
<dbReference type="EC" id="1.17.1.8" evidence="1"/>
<dbReference type="EMBL" id="CP001022">
    <property type="protein sequence ID" value="ACB59970.1"/>
    <property type="molecule type" value="Genomic_DNA"/>
</dbReference>
<dbReference type="RefSeq" id="WP_012369394.1">
    <property type="nucleotide sequence ID" value="NC_010556.1"/>
</dbReference>
<dbReference type="SMR" id="B1YJ40"/>
<dbReference type="STRING" id="262543.Exig_0488"/>
<dbReference type="KEGG" id="esi:Exig_0488"/>
<dbReference type="eggNOG" id="COG0289">
    <property type="taxonomic scope" value="Bacteria"/>
</dbReference>
<dbReference type="HOGENOM" id="CLU_047479_2_2_9"/>
<dbReference type="OrthoDB" id="9790352at2"/>
<dbReference type="UniPathway" id="UPA00034">
    <property type="reaction ID" value="UER00018"/>
</dbReference>
<dbReference type="Proteomes" id="UP000001681">
    <property type="component" value="Chromosome"/>
</dbReference>
<dbReference type="GO" id="GO:0005829">
    <property type="term" value="C:cytosol"/>
    <property type="evidence" value="ECO:0007669"/>
    <property type="project" value="TreeGrafter"/>
</dbReference>
<dbReference type="GO" id="GO:0008839">
    <property type="term" value="F:4-hydroxy-tetrahydrodipicolinate reductase"/>
    <property type="evidence" value="ECO:0007669"/>
    <property type="project" value="UniProtKB-EC"/>
</dbReference>
<dbReference type="GO" id="GO:0051287">
    <property type="term" value="F:NAD binding"/>
    <property type="evidence" value="ECO:0007669"/>
    <property type="project" value="UniProtKB-UniRule"/>
</dbReference>
<dbReference type="GO" id="GO:0050661">
    <property type="term" value="F:NADP binding"/>
    <property type="evidence" value="ECO:0007669"/>
    <property type="project" value="UniProtKB-UniRule"/>
</dbReference>
<dbReference type="GO" id="GO:0016726">
    <property type="term" value="F:oxidoreductase activity, acting on CH or CH2 groups, NAD or NADP as acceptor"/>
    <property type="evidence" value="ECO:0007669"/>
    <property type="project" value="UniProtKB-UniRule"/>
</dbReference>
<dbReference type="GO" id="GO:0019877">
    <property type="term" value="P:diaminopimelate biosynthetic process"/>
    <property type="evidence" value="ECO:0007669"/>
    <property type="project" value="UniProtKB-UniRule"/>
</dbReference>
<dbReference type="GO" id="GO:0009089">
    <property type="term" value="P:lysine biosynthetic process via diaminopimelate"/>
    <property type="evidence" value="ECO:0007669"/>
    <property type="project" value="UniProtKB-UniRule"/>
</dbReference>
<dbReference type="CDD" id="cd02274">
    <property type="entry name" value="DHDPR_N"/>
    <property type="match status" value="1"/>
</dbReference>
<dbReference type="FunFam" id="3.30.360.10:FF:000009">
    <property type="entry name" value="4-hydroxy-tetrahydrodipicolinate reductase"/>
    <property type="match status" value="1"/>
</dbReference>
<dbReference type="Gene3D" id="3.30.360.10">
    <property type="entry name" value="Dihydrodipicolinate Reductase, domain 2"/>
    <property type="match status" value="1"/>
</dbReference>
<dbReference type="Gene3D" id="3.40.50.720">
    <property type="entry name" value="NAD(P)-binding Rossmann-like Domain"/>
    <property type="match status" value="1"/>
</dbReference>
<dbReference type="HAMAP" id="MF_00102">
    <property type="entry name" value="DapB"/>
    <property type="match status" value="1"/>
</dbReference>
<dbReference type="InterPro" id="IPR022663">
    <property type="entry name" value="DapB_C"/>
</dbReference>
<dbReference type="InterPro" id="IPR000846">
    <property type="entry name" value="DapB_N"/>
</dbReference>
<dbReference type="InterPro" id="IPR022664">
    <property type="entry name" value="DapB_N_CS"/>
</dbReference>
<dbReference type="InterPro" id="IPR023940">
    <property type="entry name" value="DHDPR_bac"/>
</dbReference>
<dbReference type="InterPro" id="IPR036291">
    <property type="entry name" value="NAD(P)-bd_dom_sf"/>
</dbReference>
<dbReference type="NCBIfam" id="TIGR00036">
    <property type="entry name" value="dapB"/>
    <property type="match status" value="1"/>
</dbReference>
<dbReference type="PANTHER" id="PTHR20836:SF7">
    <property type="entry name" value="4-HYDROXY-TETRAHYDRODIPICOLINATE REDUCTASE"/>
    <property type="match status" value="1"/>
</dbReference>
<dbReference type="PANTHER" id="PTHR20836">
    <property type="entry name" value="DIHYDRODIPICOLINATE REDUCTASE"/>
    <property type="match status" value="1"/>
</dbReference>
<dbReference type="Pfam" id="PF05173">
    <property type="entry name" value="DapB_C"/>
    <property type="match status" value="1"/>
</dbReference>
<dbReference type="Pfam" id="PF01113">
    <property type="entry name" value="DapB_N"/>
    <property type="match status" value="1"/>
</dbReference>
<dbReference type="PIRSF" id="PIRSF000161">
    <property type="entry name" value="DHPR"/>
    <property type="match status" value="1"/>
</dbReference>
<dbReference type="SUPFAM" id="SSF55347">
    <property type="entry name" value="Glyceraldehyde-3-phosphate dehydrogenase-like, C-terminal domain"/>
    <property type="match status" value="1"/>
</dbReference>
<dbReference type="SUPFAM" id="SSF51735">
    <property type="entry name" value="NAD(P)-binding Rossmann-fold domains"/>
    <property type="match status" value="1"/>
</dbReference>
<dbReference type="PROSITE" id="PS01298">
    <property type="entry name" value="DAPB"/>
    <property type="match status" value="1"/>
</dbReference>
<comment type="function">
    <text evidence="1">Catalyzes the conversion of 4-hydroxy-tetrahydrodipicolinate (HTPA) to tetrahydrodipicolinate.</text>
</comment>
<comment type="catalytic activity">
    <reaction evidence="1">
        <text>(S)-2,3,4,5-tetrahydrodipicolinate + NAD(+) + H2O = (2S,4S)-4-hydroxy-2,3,4,5-tetrahydrodipicolinate + NADH + H(+)</text>
        <dbReference type="Rhea" id="RHEA:35323"/>
        <dbReference type="ChEBI" id="CHEBI:15377"/>
        <dbReference type="ChEBI" id="CHEBI:15378"/>
        <dbReference type="ChEBI" id="CHEBI:16845"/>
        <dbReference type="ChEBI" id="CHEBI:57540"/>
        <dbReference type="ChEBI" id="CHEBI:57945"/>
        <dbReference type="ChEBI" id="CHEBI:67139"/>
        <dbReference type="EC" id="1.17.1.8"/>
    </reaction>
</comment>
<comment type="catalytic activity">
    <reaction evidence="1">
        <text>(S)-2,3,4,5-tetrahydrodipicolinate + NADP(+) + H2O = (2S,4S)-4-hydroxy-2,3,4,5-tetrahydrodipicolinate + NADPH + H(+)</text>
        <dbReference type="Rhea" id="RHEA:35331"/>
        <dbReference type="ChEBI" id="CHEBI:15377"/>
        <dbReference type="ChEBI" id="CHEBI:15378"/>
        <dbReference type="ChEBI" id="CHEBI:16845"/>
        <dbReference type="ChEBI" id="CHEBI:57783"/>
        <dbReference type="ChEBI" id="CHEBI:58349"/>
        <dbReference type="ChEBI" id="CHEBI:67139"/>
        <dbReference type="EC" id="1.17.1.8"/>
    </reaction>
</comment>
<comment type="pathway">
    <text evidence="1">Amino-acid biosynthesis; L-lysine biosynthesis via DAP pathway; (S)-tetrahydrodipicolinate from L-aspartate: step 4/4.</text>
</comment>
<comment type="subcellular location">
    <subcellularLocation>
        <location evidence="1">Cytoplasm</location>
    </subcellularLocation>
</comment>
<comment type="similarity">
    <text evidence="1">Belongs to the DapB family.</text>
</comment>
<comment type="caution">
    <text evidence="2">Was originally thought to be a dihydrodipicolinate reductase (DHDPR), catalyzing the conversion of dihydrodipicolinate to tetrahydrodipicolinate. However, it was shown in E.coli that the substrate of the enzymatic reaction is not dihydrodipicolinate (DHDP) but in fact (2S,4S)-4-hydroxy-2,3,4,5-tetrahydrodipicolinic acid (HTPA), the product released by the DapA-catalyzed reaction.</text>
</comment>
<keyword id="KW-0028">Amino-acid biosynthesis</keyword>
<keyword id="KW-0963">Cytoplasm</keyword>
<keyword id="KW-0220">Diaminopimelate biosynthesis</keyword>
<keyword id="KW-0457">Lysine biosynthesis</keyword>
<keyword id="KW-0520">NAD</keyword>
<keyword id="KW-0521">NADP</keyword>
<keyword id="KW-0560">Oxidoreductase</keyword>
<keyword id="KW-1185">Reference proteome</keyword>
<protein>
    <recommendedName>
        <fullName evidence="1">4-hydroxy-tetrahydrodipicolinate reductase</fullName>
        <shortName evidence="1">HTPA reductase</shortName>
        <ecNumber evidence="1">1.17.1.8</ecNumber>
    </recommendedName>
</protein>
<proteinExistence type="inferred from homology"/>
<feature type="chain" id="PRO_1000093970" description="4-hydroxy-tetrahydrodipicolinate reductase">
    <location>
        <begin position="1"/>
        <end position="248"/>
    </location>
</feature>
<feature type="active site" description="Proton donor/acceptor" evidence="1">
    <location>
        <position position="134"/>
    </location>
</feature>
<feature type="active site" description="Proton donor" evidence="1">
    <location>
        <position position="138"/>
    </location>
</feature>
<feature type="binding site" evidence="1">
    <location>
        <position position="28"/>
    </location>
    <ligand>
        <name>NAD(+)</name>
        <dbReference type="ChEBI" id="CHEBI:57540"/>
    </ligand>
</feature>
<feature type="binding site" evidence="1">
    <location>
        <position position="29"/>
    </location>
    <ligand>
        <name>NADP(+)</name>
        <dbReference type="ChEBI" id="CHEBI:58349"/>
    </ligand>
</feature>
<feature type="binding site" evidence="1">
    <location>
        <begin position="78"/>
        <end position="80"/>
    </location>
    <ligand>
        <name>NAD(+)</name>
        <dbReference type="ChEBI" id="CHEBI:57540"/>
    </ligand>
</feature>
<feature type="binding site" evidence="1">
    <location>
        <begin position="102"/>
        <end position="105"/>
    </location>
    <ligand>
        <name>NAD(+)</name>
        <dbReference type="ChEBI" id="CHEBI:57540"/>
    </ligand>
</feature>
<feature type="binding site" evidence="1">
    <location>
        <position position="135"/>
    </location>
    <ligand>
        <name>(S)-2,3,4,5-tetrahydrodipicolinate</name>
        <dbReference type="ChEBI" id="CHEBI:16845"/>
    </ligand>
</feature>
<feature type="binding site" evidence="1">
    <location>
        <begin position="144"/>
        <end position="145"/>
    </location>
    <ligand>
        <name>(S)-2,3,4,5-tetrahydrodipicolinate</name>
        <dbReference type="ChEBI" id="CHEBI:16845"/>
    </ligand>
</feature>
<evidence type="ECO:0000255" key="1">
    <source>
        <dbReference type="HAMAP-Rule" id="MF_00102"/>
    </source>
</evidence>
<evidence type="ECO:0000305" key="2"/>
<reference key="1">
    <citation type="submission" date="2008-04" db="EMBL/GenBank/DDBJ databases">
        <title>Complete sequence of chromosome of Exiguobacterium sibiricum 255-15.</title>
        <authorList>
            <consortium name="US DOE Joint Genome Institute"/>
            <person name="Copeland A."/>
            <person name="Lucas S."/>
            <person name="Lapidus A."/>
            <person name="Glavina del Rio T."/>
            <person name="Dalin E."/>
            <person name="Tice H."/>
            <person name="Bruce D."/>
            <person name="Goodwin L."/>
            <person name="Pitluck S."/>
            <person name="Kiss H."/>
            <person name="Chertkov O."/>
            <person name="Monk C."/>
            <person name="Brettin T."/>
            <person name="Detter J.C."/>
            <person name="Han C."/>
            <person name="Kuske C.R."/>
            <person name="Schmutz J."/>
            <person name="Larimer F."/>
            <person name="Land M."/>
            <person name="Hauser L."/>
            <person name="Kyrpides N."/>
            <person name="Mikhailova N."/>
            <person name="Vishnivetskaya T."/>
            <person name="Rodrigues D.F."/>
            <person name="Gilichinsky D."/>
            <person name="Tiedje J."/>
            <person name="Richardson P."/>
        </authorList>
    </citation>
    <scope>NUCLEOTIDE SEQUENCE [LARGE SCALE GENOMIC DNA]</scope>
    <source>
        <strain>DSM 17290 / CCUG 55495 / CIP 109462 / JCM 13490 / 255-15</strain>
    </source>
</reference>
<name>DAPB_EXIS2</name>